<sequence length="220" mass="23988">MDQEAKDLLVRGAAQLGVELTSAQVGKFALFAAELRKWNRKINLTAITTEREIALKHFVDSLSLCRAVGKGGKLLDLGSGGGFPVIPFAILHPKSEVVSVDAVEKKIIFQRHMGRLLGLSCFQSIHARGEELAGRFAGHFDWIVSRAFSDIPTFVRMALPLLRPNGAIVAMKGQGGREEAETSRPALEVLGVEIRQVLEFPLPFSGDGRSLIVMGRKNES</sequence>
<keyword id="KW-0963">Cytoplasm</keyword>
<keyword id="KW-0489">Methyltransferase</keyword>
<keyword id="KW-1185">Reference proteome</keyword>
<keyword id="KW-0698">rRNA processing</keyword>
<keyword id="KW-0949">S-adenosyl-L-methionine</keyword>
<keyword id="KW-0808">Transferase</keyword>
<comment type="function">
    <text evidence="1">Specifically methylates the N7 position of guanine in position 527 of 16S rRNA.</text>
</comment>
<comment type="catalytic activity">
    <reaction evidence="1">
        <text>guanosine(527) in 16S rRNA + S-adenosyl-L-methionine = N(7)-methylguanosine(527) in 16S rRNA + S-adenosyl-L-homocysteine</text>
        <dbReference type="Rhea" id="RHEA:42732"/>
        <dbReference type="Rhea" id="RHEA-COMP:10209"/>
        <dbReference type="Rhea" id="RHEA-COMP:10210"/>
        <dbReference type="ChEBI" id="CHEBI:57856"/>
        <dbReference type="ChEBI" id="CHEBI:59789"/>
        <dbReference type="ChEBI" id="CHEBI:74269"/>
        <dbReference type="ChEBI" id="CHEBI:74480"/>
        <dbReference type="EC" id="2.1.1.170"/>
    </reaction>
</comment>
<comment type="subcellular location">
    <subcellularLocation>
        <location evidence="1">Cytoplasm</location>
    </subcellularLocation>
</comment>
<comment type="similarity">
    <text evidence="1">Belongs to the methyltransferase superfamily. RNA methyltransferase RsmG family.</text>
</comment>
<feature type="chain" id="PRO_1000010151" description="Ribosomal RNA small subunit methyltransferase G">
    <location>
        <begin position="1"/>
        <end position="220"/>
    </location>
</feature>
<feature type="binding site" evidence="1">
    <location>
        <position position="78"/>
    </location>
    <ligand>
        <name>S-adenosyl-L-methionine</name>
        <dbReference type="ChEBI" id="CHEBI:59789"/>
    </ligand>
</feature>
<feature type="binding site" evidence="1">
    <location>
        <position position="83"/>
    </location>
    <ligand>
        <name>S-adenosyl-L-methionine</name>
        <dbReference type="ChEBI" id="CHEBI:59789"/>
    </ligand>
</feature>
<feature type="binding site" evidence="1">
    <location>
        <begin position="129"/>
        <end position="130"/>
    </location>
    <ligand>
        <name>S-adenosyl-L-methionine</name>
        <dbReference type="ChEBI" id="CHEBI:59789"/>
    </ligand>
</feature>
<feature type="binding site" evidence="1">
    <location>
        <position position="146"/>
    </location>
    <ligand>
        <name>S-adenosyl-L-methionine</name>
        <dbReference type="ChEBI" id="CHEBI:59789"/>
    </ligand>
</feature>
<organism>
    <name type="scientific">Geobacter metallireducens (strain ATCC 53774 / DSM 7210 / GS-15)</name>
    <dbReference type="NCBI Taxonomy" id="269799"/>
    <lineage>
        <taxon>Bacteria</taxon>
        <taxon>Pseudomonadati</taxon>
        <taxon>Thermodesulfobacteriota</taxon>
        <taxon>Desulfuromonadia</taxon>
        <taxon>Geobacterales</taxon>
        <taxon>Geobacteraceae</taxon>
        <taxon>Geobacter</taxon>
    </lineage>
</organism>
<dbReference type="EC" id="2.1.1.170" evidence="1"/>
<dbReference type="EMBL" id="CP000148">
    <property type="protein sequence ID" value="ABB33763.1"/>
    <property type="molecule type" value="Genomic_DNA"/>
</dbReference>
<dbReference type="RefSeq" id="WP_004513714.1">
    <property type="nucleotide sequence ID" value="NC_007517.1"/>
</dbReference>
<dbReference type="SMR" id="Q39PR1"/>
<dbReference type="STRING" id="269799.Gmet_3558"/>
<dbReference type="KEGG" id="gme:Gmet_3558"/>
<dbReference type="eggNOG" id="COG0357">
    <property type="taxonomic scope" value="Bacteria"/>
</dbReference>
<dbReference type="HOGENOM" id="CLU_065341_2_0_7"/>
<dbReference type="Proteomes" id="UP000007073">
    <property type="component" value="Chromosome"/>
</dbReference>
<dbReference type="GO" id="GO:0005829">
    <property type="term" value="C:cytosol"/>
    <property type="evidence" value="ECO:0007669"/>
    <property type="project" value="TreeGrafter"/>
</dbReference>
<dbReference type="GO" id="GO:0070043">
    <property type="term" value="F:rRNA (guanine-N7-)-methyltransferase activity"/>
    <property type="evidence" value="ECO:0007669"/>
    <property type="project" value="UniProtKB-UniRule"/>
</dbReference>
<dbReference type="CDD" id="cd02440">
    <property type="entry name" value="AdoMet_MTases"/>
    <property type="match status" value="1"/>
</dbReference>
<dbReference type="Gene3D" id="3.40.50.150">
    <property type="entry name" value="Vaccinia Virus protein VP39"/>
    <property type="match status" value="1"/>
</dbReference>
<dbReference type="HAMAP" id="MF_00074">
    <property type="entry name" value="16SrRNA_methyltr_G"/>
    <property type="match status" value="1"/>
</dbReference>
<dbReference type="InterPro" id="IPR003682">
    <property type="entry name" value="rRNA_ssu_MeTfrase_G"/>
</dbReference>
<dbReference type="InterPro" id="IPR029063">
    <property type="entry name" value="SAM-dependent_MTases_sf"/>
</dbReference>
<dbReference type="NCBIfam" id="TIGR00138">
    <property type="entry name" value="rsmG_gidB"/>
    <property type="match status" value="1"/>
</dbReference>
<dbReference type="PANTHER" id="PTHR31760">
    <property type="entry name" value="S-ADENOSYL-L-METHIONINE-DEPENDENT METHYLTRANSFERASES SUPERFAMILY PROTEIN"/>
    <property type="match status" value="1"/>
</dbReference>
<dbReference type="PANTHER" id="PTHR31760:SF0">
    <property type="entry name" value="S-ADENOSYL-L-METHIONINE-DEPENDENT METHYLTRANSFERASES SUPERFAMILY PROTEIN"/>
    <property type="match status" value="1"/>
</dbReference>
<dbReference type="Pfam" id="PF02527">
    <property type="entry name" value="GidB"/>
    <property type="match status" value="1"/>
</dbReference>
<dbReference type="PIRSF" id="PIRSF003078">
    <property type="entry name" value="GidB"/>
    <property type="match status" value="1"/>
</dbReference>
<dbReference type="SUPFAM" id="SSF53335">
    <property type="entry name" value="S-adenosyl-L-methionine-dependent methyltransferases"/>
    <property type="match status" value="1"/>
</dbReference>
<name>RSMG_GEOMG</name>
<gene>
    <name evidence="1" type="primary">rsmG</name>
    <name type="ordered locus">Gmet_3558</name>
</gene>
<reference key="1">
    <citation type="journal article" date="2009" name="BMC Microbiol.">
        <title>The genome sequence of Geobacter metallireducens: features of metabolism, physiology and regulation common and dissimilar to Geobacter sulfurreducens.</title>
        <authorList>
            <person name="Aklujkar M."/>
            <person name="Krushkal J."/>
            <person name="DiBartolo G."/>
            <person name="Lapidus A."/>
            <person name="Land M.L."/>
            <person name="Lovley D.R."/>
        </authorList>
    </citation>
    <scope>NUCLEOTIDE SEQUENCE [LARGE SCALE GENOMIC DNA]</scope>
    <source>
        <strain>ATCC 53774 / DSM 7210 / GS-15</strain>
    </source>
</reference>
<protein>
    <recommendedName>
        <fullName evidence="1">Ribosomal RNA small subunit methyltransferase G</fullName>
        <ecNumber evidence="1">2.1.1.170</ecNumber>
    </recommendedName>
    <alternativeName>
        <fullName evidence="1">16S rRNA 7-methylguanosine methyltransferase</fullName>
        <shortName evidence="1">16S rRNA m7G methyltransferase</shortName>
    </alternativeName>
</protein>
<accession>Q39PR1</accession>
<evidence type="ECO:0000255" key="1">
    <source>
        <dbReference type="HAMAP-Rule" id="MF_00074"/>
    </source>
</evidence>
<proteinExistence type="inferred from homology"/>